<proteinExistence type="evidence at transcript level"/>
<protein>
    <recommendedName>
        <fullName>Cuticular glutathione peroxidase</fullName>
        <ecNumber>1.11.1.9</ecNumber>
    </recommendedName>
    <alternativeName>
        <fullName>Cuticular glycoprotein gp29</fullName>
    </alternativeName>
    <alternativeName>
        <fullName>Major surface antigen gp29</fullName>
    </alternativeName>
    <alternativeName>
        <fullName>gp30</fullName>
    </alternativeName>
</protein>
<organism>
    <name type="scientific">Wuchereria bancrofti</name>
    <dbReference type="NCBI Taxonomy" id="6293"/>
    <lineage>
        <taxon>Eukaryota</taxon>
        <taxon>Metazoa</taxon>
        <taxon>Ecdysozoa</taxon>
        <taxon>Nematoda</taxon>
        <taxon>Chromadorea</taxon>
        <taxon>Rhabditida</taxon>
        <taxon>Spirurina</taxon>
        <taxon>Spiruromorpha</taxon>
        <taxon>Filarioidea</taxon>
        <taxon>Onchocercidae</taxon>
        <taxon>Wuchereria</taxon>
    </lineage>
</organism>
<name>GPXC_WUCBA</name>
<evidence type="ECO:0000250" key="1"/>
<evidence type="ECO:0000255" key="2"/>
<evidence type="ECO:0000305" key="3"/>
<feature type="signal peptide" evidence="2">
    <location>
        <begin position="1"/>
        <end position="19"/>
    </location>
</feature>
<feature type="chain" id="PRO_0000013093" description="Cuticular glutathione peroxidase">
    <location>
        <begin position="20"/>
        <end position="223"/>
    </location>
</feature>
<feature type="active site" evidence="1">
    <location>
        <position position="74"/>
    </location>
</feature>
<feature type="glycosylation site" description="N-linked (GlcNAc...) asparagine" evidence="2">
    <location>
        <position position="39"/>
    </location>
</feature>
<feature type="glycosylation site" description="N-linked (GlcNAc...) asparagine" evidence="2">
    <location>
        <position position="92"/>
    </location>
</feature>
<keyword id="KW-0325">Glycoprotein</keyword>
<keyword id="KW-0560">Oxidoreductase</keyword>
<keyword id="KW-0575">Peroxidase</keyword>
<keyword id="KW-0964">Secreted</keyword>
<keyword id="KW-0732">Signal</keyword>
<dbReference type="EC" id="1.11.1.9"/>
<dbReference type="EMBL" id="X69126">
    <property type="protein sequence ID" value="CAA48880.1"/>
    <property type="molecule type" value="Genomic_DNA"/>
</dbReference>
<dbReference type="PIR" id="S60592">
    <property type="entry name" value="S60592"/>
</dbReference>
<dbReference type="SMR" id="P35666"/>
<dbReference type="STRING" id="6293.P35666"/>
<dbReference type="PeroxiBase" id="3751">
    <property type="entry name" value="WbGPx01"/>
</dbReference>
<dbReference type="Proteomes" id="UP000093561">
    <property type="component" value="Unassembled WGS sequence"/>
</dbReference>
<dbReference type="GO" id="GO:0005576">
    <property type="term" value="C:extracellular region"/>
    <property type="evidence" value="ECO:0007669"/>
    <property type="project" value="UniProtKB-SubCell"/>
</dbReference>
<dbReference type="GO" id="GO:0004602">
    <property type="term" value="F:glutathione peroxidase activity"/>
    <property type="evidence" value="ECO:0007669"/>
    <property type="project" value="UniProtKB-EC"/>
</dbReference>
<dbReference type="GO" id="GO:0006979">
    <property type="term" value="P:response to oxidative stress"/>
    <property type="evidence" value="ECO:0007669"/>
    <property type="project" value="InterPro"/>
</dbReference>
<dbReference type="CDD" id="cd00340">
    <property type="entry name" value="GSH_Peroxidase"/>
    <property type="match status" value="1"/>
</dbReference>
<dbReference type="FunFam" id="3.40.30.10:FF:000283">
    <property type="entry name" value="Glutathione peroxidase"/>
    <property type="match status" value="1"/>
</dbReference>
<dbReference type="Gene3D" id="3.40.30.10">
    <property type="entry name" value="Glutaredoxin"/>
    <property type="match status" value="1"/>
</dbReference>
<dbReference type="InterPro" id="IPR000889">
    <property type="entry name" value="Glutathione_peroxidase"/>
</dbReference>
<dbReference type="InterPro" id="IPR029759">
    <property type="entry name" value="GPX_AS"/>
</dbReference>
<dbReference type="InterPro" id="IPR029760">
    <property type="entry name" value="GPX_CS"/>
</dbReference>
<dbReference type="InterPro" id="IPR036249">
    <property type="entry name" value="Thioredoxin-like_sf"/>
</dbReference>
<dbReference type="PANTHER" id="PTHR11592">
    <property type="entry name" value="GLUTATHIONE PEROXIDASE"/>
    <property type="match status" value="1"/>
</dbReference>
<dbReference type="PANTHER" id="PTHR11592:SF88">
    <property type="entry name" value="GLUTATHIONE PEROXIDASE-RELATED"/>
    <property type="match status" value="1"/>
</dbReference>
<dbReference type="Pfam" id="PF00255">
    <property type="entry name" value="GSHPx"/>
    <property type="match status" value="1"/>
</dbReference>
<dbReference type="PIRSF" id="PIRSF000303">
    <property type="entry name" value="Glutathion_perox"/>
    <property type="match status" value="1"/>
</dbReference>
<dbReference type="PRINTS" id="PR01011">
    <property type="entry name" value="GLUTPROXDASE"/>
</dbReference>
<dbReference type="SUPFAM" id="SSF52833">
    <property type="entry name" value="Thioredoxin-like"/>
    <property type="match status" value="1"/>
</dbReference>
<dbReference type="PROSITE" id="PS00460">
    <property type="entry name" value="GLUTATHIONE_PEROXID_1"/>
    <property type="match status" value="1"/>
</dbReference>
<dbReference type="PROSITE" id="PS00763">
    <property type="entry name" value="GLUTATHIONE_PEROXID_2"/>
    <property type="match status" value="1"/>
</dbReference>
<dbReference type="PROSITE" id="PS51355">
    <property type="entry name" value="GLUTATHIONE_PEROXID_3"/>
    <property type="match status" value="1"/>
</dbReference>
<comment type="function">
    <text>Could inhibit the oxidative burst of leukocytes and neutralize the secondary products of lipid peroxidation, thus providing the resistance of these parasites to immune effector mechanisms and their persistence in the mammalian host. It may also be involved in the formation of cross-linking residues such as dityrosine, trityrosine and isotrityrosine identified in cuticular collagen. Highly cross-linked external cortex may also serve to protect the parasite from immune attack.</text>
</comment>
<comment type="catalytic activity">
    <reaction>
        <text>2 glutathione + H2O2 = glutathione disulfide + 2 H2O</text>
        <dbReference type="Rhea" id="RHEA:16833"/>
        <dbReference type="ChEBI" id="CHEBI:15377"/>
        <dbReference type="ChEBI" id="CHEBI:16240"/>
        <dbReference type="ChEBI" id="CHEBI:57925"/>
        <dbReference type="ChEBI" id="CHEBI:58297"/>
        <dbReference type="EC" id="1.11.1.9"/>
    </reaction>
</comment>
<comment type="subunit">
    <text>Homotetramer.</text>
</comment>
<comment type="subcellular location">
    <subcellularLocation>
        <location>Secreted</location>
    </subcellularLocation>
    <text>Secreted into the cuticle and ultimately released into the medium.</text>
</comment>
<comment type="developmental stage">
    <text>Up-regulated in the third stage larvae following infection of host. Concomitant synthesis occurs at a high level through the adult stage. Not detected in microfilariae.</text>
</comment>
<comment type="similarity">
    <text evidence="3">Belongs to the glutathione peroxidase family.</text>
</comment>
<accession>P35666</accession>
<sequence length="223" mass="25845">MSAQLLILSHVVLLQLIVAQLGPKIGKQFLKPKQCEITNQTVYDFHAQMLNGAQRSLTEYRNKVLLIVNVATYCAYTMQYRDFNPILGSNSNGTLNILGFPCNQFYLQEPAENHELLNGLKYVRPGHGWEPHKNMHIFGKLEVNGENDHPLYKFLKERCPPTVPVIGKRHQLIYDPIGTNDVIWNFEKFLVDKKGRPRYRFHPENWVQGTAVKPYIDELEREI</sequence>
<reference key="1">
    <citation type="journal article" date="1993" name="Mol. Biochem. Parasitol.">
        <title>Conservation of primary sequence of gp29, the major soluble cuticular glycoprotein, in three species of lymphatic filariae.</title>
        <authorList>
            <person name="Cookson E."/>
            <person name="Tang L."/>
            <person name="Selkirk M.E."/>
        </authorList>
    </citation>
    <scope>NUCLEOTIDE SEQUENCE [GENOMIC DNA]</scope>
</reference>